<dbReference type="EMBL" id="CP001184">
    <property type="protein sequence ID" value="ACI59899.1"/>
    <property type="molecule type" value="Genomic_DNA"/>
</dbReference>
<dbReference type="RefSeq" id="WP_012560226.1">
    <property type="nucleotide sequence ID" value="NC_011374.1"/>
</dbReference>
<dbReference type="SMR" id="B5ZB43"/>
<dbReference type="STRING" id="565575.UUR10_0229"/>
<dbReference type="KEGG" id="uue:UUR10_0229"/>
<dbReference type="eggNOG" id="COG0090">
    <property type="taxonomic scope" value="Bacteria"/>
</dbReference>
<dbReference type="HOGENOM" id="CLU_036235_2_1_14"/>
<dbReference type="OrthoDB" id="9778722at2"/>
<dbReference type="Proteomes" id="UP000002018">
    <property type="component" value="Chromosome"/>
</dbReference>
<dbReference type="GO" id="GO:0015934">
    <property type="term" value="C:large ribosomal subunit"/>
    <property type="evidence" value="ECO:0007669"/>
    <property type="project" value="InterPro"/>
</dbReference>
<dbReference type="GO" id="GO:0019843">
    <property type="term" value="F:rRNA binding"/>
    <property type="evidence" value="ECO:0007669"/>
    <property type="project" value="UniProtKB-UniRule"/>
</dbReference>
<dbReference type="GO" id="GO:0003735">
    <property type="term" value="F:structural constituent of ribosome"/>
    <property type="evidence" value="ECO:0007669"/>
    <property type="project" value="InterPro"/>
</dbReference>
<dbReference type="GO" id="GO:0016740">
    <property type="term" value="F:transferase activity"/>
    <property type="evidence" value="ECO:0007669"/>
    <property type="project" value="InterPro"/>
</dbReference>
<dbReference type="GO" id="GO:0002181">
    <property type="term" value="P:cytoplasmic translation"/>
    <property type="evidence" value="ECO:0007669"/>
    <property type="project" value="TreeGrafter"/>
</dbReference>
<dbReference type="FunFam" id="2.30.30.30:FF:000001">
    <property type="entry name" value="50S ribosomal protein L2"/>
    <property type="match status" value="1"/>
</dbReference>
<dbReference type="FunFam" id="2.40.50.140:FF:000003">
    <property type="entry name" value="50S ribosomal protein L2"/>
    <property type="match status" value="1"/>
</dbReference>
<dbReference type="FunFam" id="4.10.950.10:FF:000001">
    <property type="entry name" value="50S ribosomal protein L2"/>
    <property type="match status" value="1"/>
</dbReference>
<dbReference type="Gene3D" id="2.30.30.30">
    <property type="match status" value="1"/>
</dbReference>
<dbReference type="Gene3D" id="2.40.50.140">
    <property type="entry name" value="Nucleic acid-binding proteins"/>
    <property type="match status" value="1"/>
</dbReference>
<dbReference type="Gene3D" id="4.10.950.10">
    <property type="entry name" value="Ribosomal protein L2, domain 3"/>
    <property type="match status" value="1"/>
</dbReference>
<dbReference type="HAMAP" id="MF_01320_B">
    <property type="entry name" value="Ribosomal_uL2_B"/>
    <property type="match status" value="1"/>
</dbReference>
<dbReference type="InterPro" id="IPR012340">
    <property type="entry name" value="NA-bd_OB-fold"/>
</dbReference>
<dbReference type="InterPro" id="IPR014722">
    <property type="entry name" value="Rib_uL2_dom2"/>
</dbReference>
<dbReference type="InterPro" id="IPR002171">
    <property type="entry name" value="Ribosomal_uL2"/>
</dbReference>
<dbReference type="InterPro" id="IPR005880">
    <property type="entry name" value="Ribosomal_uL2_bac/org-type"/>
</dbReference>
<dbReference type="InterPro" id="IPR022669">
    <property type="entry name" value="Ribosomal_uL2_C"/>
</dbReference>
<dbReference type="InterPro" id="IPR022671">
    <property type="entry name" value="Ribosomal_uL2_CS"/>
</dbReference>
<dbReference type="InterPro" id="IPR014726">
    <property type="entry name" value="Ribosomal_uL2_dom3"/>
</dbReference>
<dbReference type="InterPro" id="IPR022666">
    <property type="entry name" value="Ribosomal_uL2_RNA-bd_dom"/>
</dbReference>
<dbReference type="InterPro" id="IPR008991">
    <property type="entry name" value="Translation_prot_SH3-like_sf"/>
</dbReference>
<dbReference type="NCBIfam" id="TIGR01171">
    <property type="entry name" value="rplB_bact"/>
    <property type="match status" value="1"/>
</dbReference>
<dbReference type="PANTHER" id="PTHR13691:SF5">
    <property type="entry name" value="LARGE RIBOSOMAL SUBUNIT PROTEIN UL2M"/>
    <property type="match status" value="1"/>
</dbReference>
<dbReference type="PANTHER" id="PTHR13691">
    <property type="entry name" value="RIBOSOMAL PROTEIN L2"/>
    <property type="match status" value="1"/>
</dbReference>
<dbReference type="Pfam" id="PF00181">
    <property type="entry name" value="Ribosomal_L2"/>
    <property type="match status" value="1"/>
</dbReference>
<dbReference type="Pfam" id="PF03947">
    <property type="entry name" value="Ribosomal_L2_C"/>
    <property type="match status" value="1"/>
</dbReference>
<dbReference type="PIRSF" id="PIRSF002158">
    <property type="entry name" value="Ribosomal_L2"/>
    <property type="match status" value="1"/>
</dbReference>
<dbReference type="SMART" id="SM01383">
    <property type="entry name" value="Ribosomal_L2"/>
    <property type="match status" value="1"/>
</dbReference>
<dbReference type="SMART" id="SM01382">
    <property type="entry name" value="Ribosomal_L2_C"/>
    <property type="match status" value="1"/>
</dbReference>
<dbReference type="SUPFAM" id="SSF50249">
    <property type="entry name" value="Nucleic acid-binding proteins"/>
    <property type="match status" value="1"/>
</dbReference>
<dbReference type="SUPFAM" id="SSF50104">
    <property type="entry name" value="Translation proteins SH3-like domain"/>
    <property type="match status" value="1"/>
</dbReference>
<dbReference type="PROSITE" id="PS00467">
    <property type="entry name" value="RIBOSOMAL_L2"/>
    <property type="match status" value="1"/>
</dbReference>
<protein>
    <recommendedName>
        <fullName evidence="1">Large ribosomal subunit protein uL2</fullName>
    </recommendedName>
    <alternativeName>
        <fullName evidence="3">50S ribosomal protein L2</fullName>
    </alternativeName>
</protein>
<reference key="1">
    <citation type="submission" date="2008-10" db="EMBL/GenBank/DDBJ databases">
        <title>Genome sequence of Ureaplasma urealyticum serovar 10 ATCC-33699.</title>
        <authorList>
            <person name="Shrivastava S."/>
            <person name="Methe B.A."/>
            <person name="Glass J."/>
            <person name="White K."/>
            <person name="Duffy L.B."/>
        </authorList>
    </citation>
    <scope>NUCLEOTIDE SEQUENCE [LARGE SCALE GENOMIC DNA]</scope>
    <source>
        <strain>ATCC 33699 / Western</strain>
    </source>
</reference>
<name>RL2_UREU1</name>
<organism>
    <name type="scientific">Ureaplasma urealyticum serovar 10 (strain ATCC 33699 / Western)</name>
    <dbReference type="NCBI Taxonomy" id="565575"/>
    <lineage>
        <taxon>Bacteria</taxon>
        <taxon>Bacillati</taxon>
        <taxon>Mycoplasmatota</taxon>
        <taxon>Mycoplasmoidales</taxon>
        <taxon>Mycoplasmoidaceae</taxon>
        <taxon>Ureaplasma</taxon>
    </lineage>
</organism>
<accession>B5ZB43</accession>
<comment type="function">
    <text evidence="1">One of the primary rRNA binding proteins. Required for association of the 30S and 50S subunits to form the 70S ribosome, for tRNA binding and peptide bond formation. It has been suggested to have peptidyltransferase activity; this is somewhat controversial. Makes several contacts with the 16S rRNA in the 70S ribosome.</text>
</comment>
<comment type="subunit">
    <text evidence="1">Part of the 50S ribosomal subunit. Forms a bridge to the 30S subunit in the 70S ribosome.</text>
</comment>
<comment type="similarity">
    <text evidence="1">Belongs to the universal ribosomal protein uL2 family.</text>
</comment>
<gene>
    <name evidence="1" type="primary">rplB</name>
    <name type="ordered locus">UUR10_0229</name>
</gene>
<feature type="chain" id="PRO_1000141637" description="Large ribosomal subunit protein uL2">
    <location>
        <begin position="1"/>
        <end position="279"/>
    </location>
</feature>
<feature type="region of interest" description="Disordered" evidence="2">
    <location>
        <begin position="223"/>
        <end position="279"/>
    </location>
</feature>
<feature type="compositionally biased region" description="Basic residues" evidence="2">
    <location>
        <begin position="254"/>
        <end position="267"/>
    </location>
</feature>
<keyword id="KW-0687">Ribonucleoprotein</keyword>
<keyword id="KW-0689">Ribosomal protein</keyword>
<keyword id="KW-0694">RNA-binding</keyword>
<keyword id="KW-0699">rRNA-binding</keyword>
<sequence length="279" mass="30931">MAVKRIKNHSSGKRQTVVVDYKSILTTSKPEKSLLVTLPKKAGRNNQGKITIRHHGGGHKRKYRIIDFKRNKDNIYGTIKSIEYDPNRTSFISLVVYADGEKRYIIAPKGIKVGDKIISGNENIDILLGNSLPLEFIPEDTLVHNIELSPNAGGQITRSAGASAQILGFDETKKYILVKLNSGEVRKFRKECRATIGTVSNDEHILENLGKAGKSRHLGVRPTVRGSAMNPNDHPHGGGEGRSPVGMDAPRTPWGKRHMGVKTRNNKKSSTSMIVRRRK</sequence>
<proteinExistence type="inferred from homology"/>
<evidence type="ECO:0000255" key="1">
    <source>
        <dbReference type="HAMAP-Rule" id="MF_01320"/>
    </source>
</evidence>
<evidence type="ECO:0000256" key="2">
    <source>
        <dbReference type="SAM" id="MobiDB-lite"/>
    </source>
</evidence>
<evidence type="ECO:0000305" key="3"/>